<reference key="1">
    <citation type="journal article" date="2002" name="Science">
        <title>50 million years of genomic stasis in endosymbiotic bacteria.</title>
        <authorList>
            <person name="Tamas I."/>
            <person name="Klasson L."/>
            <person name="Canbaeck B."/>
            <person name="Naeslund A.K."/>
            <person name="Eriksson A.-S."/>
            <person name="Wernegreen J.J."/>
            <person name="Sandstroem J.P."/>
            <person name="Moran N.A."/>
            <person name="Andersson S.G.E."/>
        </authorList>
    </citation>
    <scope>NUCLEOTIDE SEQUENCE [LARGE SCALE GENOMIC DNA]</scope>
    <source>
        <strain>Sg</strain>
    </source>
</reference>
<protein>
    <recommendedName>
        <fullName>UDP-N-acetylmuramoylalanine--D-glutamate ligase</fullName>
        <ecNumber>6.3.2.9</ecNumber>
    </recommendedName>
    <alternativeName>
        <fullName>D-glutamic acid-adding enzyme</fullName>
    </alternativeName>
    <alternativeName>
        <fullName>UDP-N-acetylmuramoyl-L-alanyl-D-glutamate synthetase</fullName>
    </alternativeName>
</protein>
<proteinExistence type="inferred from homology"/>
<gene>
    <name type="primary">murD</name>
    <name type="ordered locus">BUsg_212</name>
</gene>
<name>MURD_BUCAP</name>
<feature type="chain" id="PRO_0000108986" description="UDP-N-acetylmuramoylalanine--D-glutamate ligase">
    <location>
        <begin position="1"/>
        <end position="440"/>
    </location>
</feature>
<feature type="binding site" evidence="2">
    <location>
        <begin position="113"/>
        <end position="119"/>
    </location>
    <ligand>
        <name>ATP</name>
        <dbReference type="ChEBI" id="CHEBI:30616"/>
    </ligand>
</feature>
<evidence type="ECO:0000250" key="1"/>
<evidence type="ECO:0000255" key="2"/>
<evidence type="ECO:0000305" key="3"/>
<organism>
    <name type="scientific">Buchnera aphidicola subsp. Schizaphis graminum (strain Sg)</name>
    <dbReference type="NCBI Taxonomy" id="198804"/>
    <lineage>
        <taxon>Bacteria</taxon>
        <taxon>Pseudomonadati</taxon>
        <taxon>Pseudomonadota</taxon>
        <taxon>Gammaproteobacteria</taxon>
        <taxon>Enterobacterales</taxon>
        <taxon>Erwiniaceae</taxon>
        <taxon>Buchnera</taxon>
    </lineage>
</organism>
<keyword id="KW-0067">ATP-binding</keyword>
<keyword id="KW-0131">Cell cycle</keyword>
<keyword id="KW-0132">Cell division</keyword>
<keyword id="KW-0133">Cell shape</keyword>
<keyword id="KW-0961">Cell wall biogenesis/degradation</keyword>
<keyword id="KW-0963">Cytoplasm</keyword>
<keyword id="KW-0436">Ligase</keyword>
<keyword id="KW-0547">Nucleotide-binding</keyword>
<keyword id="KW-0573">Peptidoglycan synthesis</keyword>
<sequence>MSYNYFGKKILILGLGLTGISCINFFLKKGIQPRVIDESNKPIFLNKIPKNIEYKLGNLKENWILESDLIIISPGISSFKPILMKARSLGIDIISDIELFSRETKCPIISITGTNGKSTVATMVKKIAEKSGYKVLLGGNIGFPVLEMLNKKASLYVLELSSFQLETTFNLKSKIAVVLNITEDHLDRYPEGFEQYKKTKLSIYNKAKICLIKLKKGEKKPFNTKSKKYISFGTCNNNDYYINYEKEKAILFHKNKKIVDTSNILLNGHHNYENILTSLAISDQMKFDQKVSINVLKKFLGLPHRFQTVHINNNISWINDSKSTNVDSTKAALKNLKIKGTIWLLLGGDGKSSNFNILKKYFEKIKIKIYCFGKDGLNLSKLCKKKSIYTKTLKQAIILISKKIQPGDVVLLSPGCSSKDQFSNFEERGNLFIKLSKEIN</sequence>
<accession>Q8K9T2</accession>
<comment type="function">
    <text evidence="1">Cell wall formation. Catalyzes the addition of glutamate to the nucleotide precursor UDP-N-acetylmuramoyl-L-alanine (UMA).</text>
</comment>
<comment type="catalytic activity">
    <reaction>
        <text>UDP-N-acetyl-alpha-D-muramoyl-L-alanine + D-glutamate + ATP = UDP-N-acetyl-alpha-D-muramoyl-L-alanyl-D-glutamate + ADP + phosphate + H(+)</text>
        <dbReference type="Rhea" id="RHEA:16429"/>
        <dbReference type="ChEBI" id="CHEBI:15378"/>
        <dbReference type="ChEBI" id="CHEBI:29986"/>
        <dbReference type="ChEBI" id="CHEBI:30616"/>
        <dbReference type="ChEBI" id="CHEBI:43474"/>
        <dbReference type="ChEBI" id="CHEBI:83898"/>
        <dbReference type="ChEBI" id="CHEBI:83900"/>
        <dbReference type="ChEBI" id="CHEBI:456216"/>
        <dbReference type="EC" id="6.3.2.9"/>
    </reaction>
</comment>
<comment type="pathway">
    <text>Cell wall biogenesis; peptidoglycan biosynthesis.</text>
</comment>
<comment type="subcellular location">
    <subcellularLocation>
        <location evidence="1">Cytoplasm</location>
    </subcellularLocation>
</comment>
<comment type="similarity">
    <text evidence="3">Belongs to the MurCDEF family.</text>
</comment>
<dbReference type="EC" id="6.3.2.9"/>
<dbReference type="EMBL" id="AE013218">
    <property type="protein sequence ID" value="AAM67775.1"/>
    <property type="molecule type" value="Genomic_DNA"/>
</dbReference>
<dbReference type="RefSeq" id="WP_011053742.1">
    <property type="nucleotide sequence ID" value="NC_004061.1"/>
</dbReference>
<dbReference type="SMR" id="Q8K9T2"/>
<dbReference type="STRING" id="198804.BUsg_212"/>
<dbReference type="GeneID" id="93003679"/>
<dbReference type="KEGG" id="bas:BUsg_212"/>
<dbReference type="eggNOG" id="COG0771">
    <property type="taxonomic scope" value="Bacteria"/>
</dbReference>
<dbReference type="HOGENOM" id="CLU_032540_1_0_6"/>
<dbReference type="UniPathway" id="UPA00219"/>
<dbReference type="Proteomes" id="UP000000416">
    <property type="component" value="Chromosome"/>
</dbReference>
<dbReference type="GO" id="GO:0005737">
    <property type="term" value="C:cytoplasm"/>
    <property type="evidence" value="ECO:0007669"/>
    <property type="project" value="UniProtKB-SubCell"/>
</dbReference>
<dbReference type="GO" id="GO:0005524">
    <property type="term" value="F:ATP binding"/>
    <property type="evidence" value="ECO:0007669"/>
    <property type="project" value="UniProtKB-UniRule"/>
</dbReference>
<dbReference type="GO" id="GO:0008764">
    <property type="term" value="F:UDP-N-acetylmuramoylalanine-D-glutamate ligase activity"/>
    <property type="evidence" value="ECO:0007669"/>
    <property type="project" value="UniProtKB-UniRule"/>
</dbReference>
<dbReference type="GO" id="GO:0051301">
    <property type="term" value="P:cell division"/>
    <property type="evidence" value="ECO:0007669"/>
    <property type="project" value="UniProtKB-KW"/>
</dbReference>
<dbReference type="GO" id="GO:0071555">
    <property type="term" value="P:cell wall organization"/>
    <property type="evidence" value="ECO:0007669"/>
    <property type="project" value="UniProtKB-KW"/>
</dbReference>
<dbReference type="GO" id="GO:0009252">
    <property type="term" value="P:peptidoglycan biosynthetic process"/>
    <property type="evidence" value="ECO:0007669"/>
    <property type="project" value="UniProtKB-UniRule"/>
</dbReference>
<dbReference type="GO" id="GO:0008360">
    <property type="term" value="P:regulation of cell shape"/>
    <property type="evidence" value="ECO:0007669"/>
    <property type="project" value="UniProtKB-KW"/>
</dbReference>
<dbReference type="Gene3D" id="3.90.190.20">
    <property type="entry name" value="Mur ligase, C-terminal domain"/>
    <property type="match status" value="1"/>
</dbReference>
<dbReference type="Gene3D" id="3.40.1190.10">
    <property type="entry name" value="Mur-like, catalytic domain"/>
    <property type="match status" value="1"/>
</dbReference>
<dbReference type="Gene3D" id="3.40.50.720">
    <property type="entry name" value="NAD(P)-binding Rossmann-like Domain"/>
    <property type="match status" value="1"/>
</dbReference>
<dbReference type="HAMAP" id="MF_00639">
    <property type="entry name" value="MurD"/>
    <property type="match status" value="1"/>
</dbReference>
<dbReference type="InterPro" id="IPR036565">
    <property type="entry name" value="Mur-like_cat_sf"/>
</dbReference>
<dbReference type="InterPro" id="IPR004101">
    <property type="entry name" value="Mur_ligase_C"/>
</dbReference>
<dbReference type="InterPro" id="IPR036615">
    <property type="entry name" value="Mur_ligase_C_dom_sf"/>
</dbReference>
<dbReference type="InterPro" id="IPR013221">
    <property type="entry name" value="Mur_ligase_cen"/>
</dbReference>
<dbReference type="InterPro" id="IPR005762">
    <property type="entry name" value="MurD"/>
</dbReference>
<dbReference type="NCBIfam" id="TIGR01087">
    <property type="entry name" value="murD"/>
    <property type="match status" value="1"/>
</dbReference>
<dbReference type="PANTHER" id="PTHR43692">
    <property type="entry name" value="UDP-N-ACETYLMURAMOYLALANINE--D-GLUTAMATE LIGASE"/>
    <property type="match status" value="1"/>
</dbReference>
<dbReference type="PANTHER" id="PTHR43692:SF1">
    <property type="entry name" value="UDP-N-ACETYLMURAMOYLALANINE--D-GLUTAMATE LIGASE"/>
    <property type="match status" value="1"/>
</dbReference>
<dbReference type="Pfam" id="PF02875">
    <property type="entry name" value="Mur_ligase_C"/>
    <property type="match status" value="1"/>
</dbReference>
<dbReference type="Pfam" id="PF08245">
    <property type="entry name" value="Mur_ligase_M"/>
    <property type="match status" value="1"/>
</dbReference>
<dbReference type="Pfam" id="PF21799">
    <property type="entry name" value="MurD-like_N"/>
    <property type="match status" value="1"/>
</dbReference>
<dbReference type="SUPFAM" id="SSF51984">
    <property type="entry name" value="MurCD N-terminal domain"/>
    <property type="match status" value="1"/>
</dbReference>
<dbReference type="SUPFAM" id="SSF53623">
    <property type="entry name" value="MurD-like peptide ligases, catalytic domain"/>
    <property type="match status" value="1"/>
</dbReference>
<dbReference type="SUPFAM" id="SSF53244">
    <property type="entry name" value="MurD-like peptide ligases, peptide-binding domain"/>
    <property type="match status" value="1"/>
</dbReference>